<sequence length="376" mass="41748">MCDDEVAALVVDNGSGMCKAGFAGDDAPRAVFPSIVGRPRHQGVMVGMGQKDSYVGDEAQSKRGILTLKYPIEHGIVTNWDDMEKIWHHTFYNELRVAPEEHPVLLTEAPLNPKANREKMTQIMFETFNAPAMYVAIQAVLSLYASGRTTGIVLDSGDGVTHTVPIYEGYALPHAILRLDLAGRDLTDYLMKILTERGYSFTTTAEREIVRDIKEKLCYSALDFEQEMATAAASSSLEKSYELPDGQVITIGNERFRCPETLFQPAFIGMESAGIHETTYNSIMKCDIDIRKDLYANTVLSGGTSMYPGIADRMQKEITALAPSSMKIKIIAPPERKYSVWIGGSILASLSTFQQMWISKQEYDESGPSIVHRKCF</sequence>
<dbReference type="EC" id="3.6.4.-" evidence="2"/>
<dbReference type="EMBL" id="U32352">
    <property type="protein sequence ID" value="AAA86869.1"/>
    <property type="molecule type" value="Genomic_DNA"/>
</dbReference>
<dbReference type="EMBL" id="U32348">
    <property type="protein sequence ID" value="AAA86869.1"/>
    <property type="status" value="JOINED"/>
    <property type="molecule type" value="Genomic_DNA"/>
</dbReference>
<dbReference type="EMBL" id="U32349">
    <property type="protein sequence ID" value="AAA86869.1"/>
    <property type="status" value="JOINED"/>
    <property type="molecule type" value="Genomic_DNA"/>
</dbReference>
<dbReference type="EMBL" id="U32350">
    <property type="protein sequence ID" value="AAA86869.1"/>
    <property type="status" value="JOINED"/>
    <property type="molecule type" value="Genomic_DNA"/>
</dbReference>
<dbReference type="EMBL" id="U32351">
    <property type="protein sequence ID" value="AAA86869.1"/>
    <property type="status" value="JOINED"/>
    <property type="molecule type" value="Genomic_DNA"/>
</dbReference>
<dbReference type="SMR" id="P53463"/>
<dbReference type="GO" id="GO:0005737">
    <property type="term" value="C:cytoplasm"/>
    <property type="evidence" value="ECO:0007669"/>
    <property type="project" value="UniProtKB-SubCell"/>
</dbReference>
<dbReference type="GO" id="GO:0005856">
    <property type="term" value="C:cytoskeleton"/>
    <property type="evidence" value="ECO:0007669"/>
    <property type="project" value="UniProtKB-SubCell"/>
</dbReference>
<dbReference type="GO" id="GO:0005524">
    <property type="term" value="F:ATP binding"/>
    <property type="evidence" value="ECO:0007669"/>
    <property type="project" value="UniProtKB-KW"/>
</dbReference>
<dbReference type="GO" id="GO:0016787">
    <property type="term" value="F:hydrolase activity"/>
    <property type="evidence" value="ECO:0007669"/>
    <property type="project" value="UniProtKB-KW"/>
</dbReference>
<dbReference type="CDD" id="cd10224">
    <property type="entry name" value="ASKHA_NBD_actin"/>
    <property type="match status" value="1"/>
</dbReference>
<dbReference type="FunFam" id="2.30.36.70:FF:000001">
    <property type="entry name" value="Actin, alpha skeletal muscle"/>
    <property type="match status" value="1"/>
</dbReference>
<dbReference type="FunFam" id="3.30.420.40:FF:000131">
    <property type="entry name" value="Actin, alpha skeletal muscle"/>
    <property type="match status" value="1"/>
</dbReference>
<dbReference type="FunFam" id="3.30.420.40:FF:000291">
    <property type="entry name" value="Actin, alpha skeletal muscle"/>
    <property type="match status" value="1"/>
</dbReference>
<dbReference type="FunFam" id="3.90.640.10:FF:000047">
    <property type="entry name" value="Actin, alpha skeletal muscle"/>
    <property type="match status" value="1"/>
</dbReference>
<dbReference type="FunFam" id="3.30.420.40:FF:000058">
    <property type="entry name" value="Putative actin-related protein 5"/>
    <property type="match status" value="1"/>
</dbReference>
<dbReference type="Gene3D" id="3.30.420.40">
    <property type="match status" value="2"/>
</dbReference>
<dbReference type="Gene3D" id="3.90.640.10">
    <property type="entry name" value="Actin, Chain A, domain 4"/>
    <property type="match status" value="1"/>
</dbReference>
<dbReference type="InterPro" id="IPR004000">
    <property type="entry name" value="Actin"/>
</dbReference>
<dbReference type="InterPro" id="IPR020902">
    <property type="entry name" value="Actin/actin-like_CS"/>
</dbReference>
<dbReference type="InterPro" id="IPR004001">
    <property type="entry name" value="Actin_CS"/>
</dbReference>
<dbReference type="InterPro" id="IPR043129">
    <property type="entry name" value="ATPase_NBD"/>
</dbReference>
<dbReference type="PANTHER" id="PTHR11937">
    <property type="entry name" value="ACTIN"/>
    <property type="match status" value="1"/>
</dbReference>
<dbReference type="Pfam" id="PF00022">
    <property type="entry name" value="Actin"/>
    <property type="match status" value="1"/>
</dbReference>
<dbReference type="PRINTS" id="PR00190">
    <property type="entry name" value="ACTIN"/>
</dbReference>
<dbReference type="SMART" id="SM00268">
    <property type="entry name" value="ACTIN"/>
    <property type="match status" value="1"/>
</dbReference>
<dbReference type="SUPFAM" id="SSF53067">
    <property type="entry name" value="Actin-like ATPase domain"/>
    <property type="match status" value="2"/>
</dbReference>
<dbReference type="PROSITE" id="PS00406">
    <property type="entry name" value="ACTINS_1"/>
    <property type="match status" value="1"/>
</dbReference>
<dbReference type="PROSITE" id="PS00432">
    <property type="entry name" value="ACTINS_2"/>
    <property type="match status" value="1"/>
</dbReference>
<dbReference type="PROSITE" id="PS01132">
    <property type="entry name" value="ACTINS_ACT_LIKE"/>
    <property type="match status" value="1"/>
</dbReference>
<comment type="function">
    <text>Actins are highly conserved proteins that are involved in various types of cell motility and are ubiquitously expressed in all eukaryotic cells.</text>
</comment>
<comment type="catalytic activity">
    <reaction evidence="2">
        <text>ATP + H2O = ADP + phosphate + H(+)</text>
        <dbReference type="Rhea" id="RHEA:13065"/>
        <dbReference type="ChEBI" id="CHEBI:15377"/>
        <dbReference type="ChEBI" id="CHEBI:15378"/>
        <dbReference type="ChEBI" id="CHEBI:30616"/>
        <dbReference type="ChEBI" id="CHEBI:43474"/>
        <dbReference type="ChEBI" id="CHEBI:456216"/>
    </reaction>
</comment>
<comment type="subcellular location">
    <subcellularLocation>
        <location>Cytoplasm</location>
    </subcellularLocation>
    <subcellularLocation>
        <location>Cytoplasm</location>
        <location>Cytoskeleton</location>
    </subcellularLocation>
</comment>
<comment type="similarity">
    <text evidence="3">Belongs to the actin family.</text>
</comment>
<feature type="propeptide" id="PRO_0000000680" description="Removed in mature form" evidence="1">
    <location>
        <begin position="1"/>
        <end position="2"/>
    </location>
</feature>
<feature type="chain" id="PRO_0000000681" description="Actin, cytoskeletal">
    <location>
        <begin position="3"/>
        <end position="376"/>
    </location>
</feature>
<feature type="modified residue" description="N-acetylaspartate" evidence="1">
    <location>
        <position position="3"/>
    </location>
</feature>
<name>ACTM_HELER</name>
<evidence type="ECO:0000250" key="1"/>
<evidence type="ECO:0000250" key="2">
    <source>
        <dbReference type="UniProtKB" id="P68137"/>
    </source>
</evidence>
<evidence type="ECO:0000305" key="3"/>
<proteinExistence type="inferred from homology"/>
<keyword id="KW-0007">Acetylation</keyword>
<keyword id="KW-0067">ATP-binding</keyword>
<keyword id="KW-0963">Cytoplasm</keyword>
<keyword id="KW-0206">Cytoskeleton</keyword>
<keyword id="KW-0378">Hydrolase</keyword>
<keyword id="KW-0547">Nucleotide-binding</keyword>
<accession>P53463</accession>
<organism>
    <name type="scientific">Heliocidaris erythrogramma</name>
    <name type="common">Sea urchin</name>
    <dbReference type="NCBI Taxonomy" id="7634"/>
    <lineage>
        <taxon>Eukaryota</taxon>
        <taxon>Metazoa</taxon>
        <taxon>Echinodermata</taxon>
        <taxon>Eleutherozoa</taxon>
        <taxon>Echinozoa</taxon>
        <taxon>Echinoidea</taxon>
        <taxon>Euechinoidea</taxon>
        <taxon>Echinacea</taxon>
        <taxon>Camarodonta</taxon>
        <taxon>Echinidea</taxon>
        <taxon>Echinometridae</taxon>
        <taxon>Heliocidaris</taxon>
    </lineage>
</organism>
<reference key="1">
    <citation type="journal article" date="1997" name="Mol. Biol. Evol.">
        <title>Rapid evolution in a conserved gene family. Evolution of the actin gene family in the sea urchin genus Heliocidaris and related genera.</title>
        <authorList>
            <person name="Kissinger J.C."/>
            <person name="Hahn J.-H."/>
            <person name="Raff R.A."/>
        </authorList>
    </citation>
    <scope>NUCLEOTIDE SEQUENCE [GENOMIC DNA]</scope>
</reference>
<protein>
    <recommendedName>
        <fullName>Actin, cytoskeletal</fullName>
        <ecNumber evidence="2">3.6.4.-</ecNumber>
    </recommendedName>
    <alternativeName>
        <fullName>M</fullName>
    </alternativeName>
</protein>